<reference key="1">
    <citation type="journal article" date="2004" name="Nat. Biotechnol.">
        <title>Complete sequence and comparative genome analysis of the dairy bacterium Streptococcus thermophilus.</title>
        <authorList>
            <person name="Bolotin A."/>
            <person name="Quinquis B."/>
            <person name="Renault P."/>
            <person name="Sorokin A."/>
            <person name="Ehrlich S.D."/>
            <person name="Kulakauskas S."/>
            <person name="Lapidus A."/>
            <person name="Goltsman E."/>
            <person name="Mazur M."/>
            <person name="Pusch G.D."/>
            <person name="Fonstein M."/>
            <person name="Overbeek R."/>
            <person name="Kyprides N."/>
            <person name="Purnelle B."/>
            <person name="Prozzi D."/>
            <person name="Ngui K."/>
            <person name="Masuy D."/>
            <person name="Hancy F."/>
            <person name="Burteau S."/>
            <person name="Boutry M."/>
            <person name="Delcour J."/>
            <person name="Goffeau A."/>
            <person name="Hols P."/>
        </authorList>
    </citation>
    <scope>NUCLEOTIDE SEQUENCE [LARGE SCALE GENOMIC DNA]</scope>
    <source>
        <strain>CNRZ 1066</strain>
    </source>
</reference>
<organism>
    <name type="scientific">Streptococcus thermophilus (strain CNRZ 1066)</name>
    <dbReference type="NCBI Taxonomy" id="299768"/>
    <lineage>
        <taxon>Bacteria</taxon>
        <taxon>Bacillati</taxon>
        <taxon>Bacillota</taxon>
        <taxon>Bacilli</taxon>
        <taxon>Lactobacillales</taxon>
        <taxon>Streptococcaceae</taxon>
        <taxon>Streptococcus</taxon>
    </lineage>
</organism>
<comment type="similarity">
    <text evidence="1">Belongs to the bacterial ribosomal protein bS16 family.</text>
</comment>
<evidence type="ECO:0000255" key="1">
    <source>
        <dbReference type="HAMAP-Rule" id="MF_00385"/>
    </source>
</evidence>
<evidence type="ECO:0000305" key="2"/>
<accession>Q5LYM4</accession>
<feature type="chain" id="PRO_0000243879" description="Small ribosomal subunit protein bS16">
    <location>
        <begin position="1"/>
        <end position="90"/>
    </location>
</feature>
<protein>
    <recommendedName>
        <fullName evidence="1">Small ribosomal subunit protein bS16</fullName>
    </recommendedName>
    <alternativeName>
        <fullName evidence="2">30S ribosomal protein S16</fullName>
    </alternativeName>
</protein>
<name>RS16_STRT1</name>
<sequence length="90" mass="10398">MAVKIRLTRMGSKKKPFYRINVADSRAPRDGRFIETVGTYNPLVEENQVTLKEERVLEWLSKGAQPSDTVRNILSKEGVMKKFHESKFSK</sequence>
<keyword id="KW-0687">Ribonucleoprotein</keyword>
<keyword id="KW-0689">Ribosomal protein</keyword>
<proteinExistence type="inferred from homology"/>
<dbReference type="EMBL" id="CP000024">
    <property type="protein sequence ID" value="AAV63078.1"/>
    <property type="molecule type" value="Genomic_DNA"/>
</dbReference>
<dbReference type="RefSeq" id="WP_002884675.1">
    <property type="nucleotide sequence ID" value="NC_006449.1"/>
</dbReference>
<dbReference type="SMR" id="Q5LYM4"/>
<dbReference type="GeneID" id="93792722"/>
<dbReference type="KEGG" id="stc:str1548"/>
<dbReference type="HOGENOM" id="CLU_100590_5_0_9"/>
<dbReference type="GO" id="GO:0005737">
    <property type="term" value="C:cytoplasm"/>
    <property type="evidence" value="ECO:0007669"/>
    <property type="project" value="UniProtKB-ARBA"/>
</dbReference>
<dbReference type="GO" id="GO:0015935">
    <property type="term" value="C:small ribosomal subunit"/>
    <property type="evidence" value="ECO:0007669"/>
    <property type="project" value="TreeGrafter"/>
</dbReference>
<dbReference type="GO" id="GO:0003735">
    <property type="term" value="F:structural constituent of ribosome"/>
    <property type="evidence" value="ECO:0007669"/>
    <property type="project" value="InterPro"/>
</dbReference>
<dbReference type="GO" id="GO:0006412">
    <property type="term" value="P:translation"/>
    <property type="evidence" value="ECO:0007669"/>
    <property type="project" value="UniProtKB-UniRule"/>
</dbReference>
<dbReference type="FunFam" id="3.30.1320.10:FF:000002">
    <property type="entry name" value="30S ribosomal protein S16"/>
    <property type="match status" value="1"/>
</dbReference>
<dbReference type="Gene3D" id="3.30.1320.10">
    <property type="match status" value="1"/>
</dbReference>
<dbReference type="HAMAP" id="MF_00385">
    <property type="entry name" value="Ribosomal_bS16"/>
    <property type="match status" value="1"/>
</dbReference>
<dbReference type="InterPro" id="IPR000307">
    <property type="entry name" value="Ribosomal_bS16"/>
</dbReference>
<dbReference type="InterPro" id="IPR023803">
    <property type="entry name" value="Ribosomal_bS16_dom_sf"/>
</dbReference>
<dbReference type="NCBIfam" id="TIGR00002">
    <property type="entry name" value="S16"/>
    <property type="match status" value="1"/>
</dbReference>
<dbReference type="PANTHER" id="PTHR12919">
    <property type="entry name" value="30S RIBOSOMAL PROTEIN S16"/>
    <property type="match status" value="1"/>
</dbReference>
<dbReference type="PANTHER" id="PTHR12919:SF20">
    <property type="entry name" value="SMALL RIBOSOMAL SUBUNIT PROTEIN BS16M"/>
    <property type="match status" value="1"/>
</dbReference>
<dbReference type="Pfam" id="PF00886">
    <property type="entry name" value="Ribosomal_S16"/>
    <property type="match status" value="1"/>
</dbReference>
<dbReference type="SUPFAM" id="SSF54565">
    <property type="entry name" value="Ribosomal protein S16"/>
    <property type="match status" value="1"/>
</dbReference>
<gene>
    <name evidence="1" type="primary">rpsP</name>
    <name type="ordered locus">str1548</name>
</gene>